<protein>
    <recommendedName>
        <fullName evidence="1">Arsenate reductase 1</fullName>
        <ecNumber evidence="1">1.20.4.4</ecNumber>
    </recommendedName>
</protein>
<dbReference type="EC" id="1.20.4.4" evidence="1"/>
<dbReference type="EMBL" id="AE017195">
    <property type="protein sequence ID" value="AAS45008.1"/>
    <property type="molecule type" value="Genomic_DNA"/>
</dbReference>
<dbReference type="SMR" id="Q74NT6"/>
<dbReference type="KEGG" id="bca:BCE_A0158"/>
<dbReference type="HOGENOM" id="CLU_071415_3_2_9"/>
<dbReference type="Proteomes" id="UP000002527">
    <property type="component" value="Plasmid pBc10987"/>
</dbReference>
<dbReference type="GO" id="GO:0005737">
    <property type="term" value="C:cytoplasm"/>
    <property type="evidence" value="ECO:0007669"/>
    <property type="project" value="UniProtKB-SubCell"/>
</dbReference>
<dbReference type="GO" id="GO:0030612">
    <property type="term" value="F:arsenate reductase (thioredoxin) activity"/>
    <property type="evidence" value="ECO:0007669"/>
    <property type="project" value="UniProtKB-UniRule"/>
</dbReference>
<dbReference type="GO" id="GO:0004725">
    <property type="term" value="F:protein tyrosine phosphatase activity"/>
    <property type="evidence" value="ECO:0007669"/>
    <property type="project" value="InterPro"/>
</dbReference>
<dbReference type="GO" id="GO:0046685">
    <property type="term" value="P:response to arsenic-containing substance"/>
    <property type="evidence" value="ECO:0007669"/>
    <property type="project" value="UniProtKB-KW"/>
</dbReference>
<dbReference type="CDD" id="cd16345">
    <property type="entry name" value="LMWP_ArsC"/>
    <property type="match status" value="1"/>
</dbReference>
<dbReference type="FunFam" id="3.40.50.2300:FF:000237">
    <property type="entry name" value="Arsenate reductase"/>
    <property type="match status" value="1"/>
</dbReference>
<dbReference type="Gene3D" id="3.40.50.2300">
    <property type="match status" value="1"/>
</dbReference>
<dbReference type="HAMAP" id="MF_01624">
    <property type="entry name" value="Arsenate_reduct"/>
    <property type="match status" value="1"/>
</dbReference>
<dbReference type="InterPro" id="IPR014064">
    <property type="entry name" value="Arsenate_reductase_ArsC"/>
</dbReference>
<dbReference type="InterPro" id="IPR023485">
    <property type="entry name" value="Ptyr_pPase"/>
</dbReference>
<dbReference type="InterPro" id="IPR036196">
    <property type="entry name" value="Ptyr_pPase_sf"/>
</dbReference>
<dbReference type="NCBIfam" id="TIGR02691">
    <property type="entry name" value="arsC_pI258_fam"/>
    <property type="match status" value="1"/>
</dbReference>
<dbReference type="NCBIfam" id="NF010053">
    <property type="entry name" value="PRK13530.1"/>
    <property type="match status" value="1"/>
</dbReference>
<dbReference type="PANTHER" id="PTHR43428">
    <property type="entry name" value="ARSENATE REDUCTASE"/>
    <property type="match status" value="1"/>
</dbReference>
<dbReference type="PANTHER" id="PTHR43428:SF1">
    <property type="entry name" value="ARSENATE REDUCTASE"/>
    <property type="match status" value="1"/>
</dbReference>
<dbReference type="Pfam" id="PF01451">
    <property type="entry name" value="LMWPc"/>
    <property type="match status" value="1"/>
</dbReference>
<dbReference type="SMART" id="SM00226">
    <property type="entry name" value="LMWPc"/>
    <property type="match status" value="1"/>
</dbReference>
<dbReference type="SUPFAM" id="SSF52788">
    <property type="entry name" value="Phosphotyrosine protein phosphatases I"/>
    <property type="match status" value="1"/>
</dbReference>
<reference key="1">
    <citation type="journal article" date="2004" name="Nucleic Acids Res.">
        <title>The genome sequence of Bacillus cereus ATCC 10987 reveals metabolic adaptations and a large plasmid related to Bacillus anthracis pXO1.</title>
        <authorList>
            <person name="Rasko D.A."/>
            <person name="Ravel J."/>
            <person name="Oekstad O.A."/>
            <person name="Helgason E."/>
            <person name="Cer R.Z."/>
            <person name="Jiang L."/>
            <person name="Shores K.A."/>
            <person name="Fouts D.E."/>
            <person name="Tourasse N.J."/>
            <person name="Angiuoli S.V."/>
            <person name="Kolonay J.F."/>
            <person name="Nelson W.C."/>
            <person name="Kolstoe A.-B."/>
            <person name="Fraser C.M."/>
            <person name="Read T.D."/>
        </authorList>
    </citation>
    <scope>NUCLEOTIDE SEQUENCE [LARGE SCALE GENOMIC DNA]</scope>
    <source>
        <strain>ATCC 10987 / NRS 248</strain>
    </source>
</reference>
<geneLocation type="plasmid">
    <name>pBc10987</name>
</geneLocation>
<organism>
    <name type="scientific">Bacillus cereus (strain ATCC 10987 / NRS 248)</name>
    <dbReference type="NCBI Taxonomy" id="222523"/>
    <lineage>
        <taxon>Bacteria</taxon>
        <taxon>Bacillati</taxon>
        <taxon>Bacillota</taxon>
        <taxon>Bacilli</taxon>
        <taxon>Bacillales</taxon>
        <taxon>Bacillaceae</taxon>
        <taxon>Bacillus</taxon>
        <taxon>Bacillus cereus group</taxon>
    </lineage>
</organism>
<feature type="chain" id="PRO_0000162512" description="Arsenate reductase 1">
    <location>
        <begin position="1"/>
        <end position="134"/>
    </location>
</feature>
<feature type="active site" description="Nucleophile" evidence="1">
    <location>
        <position position="11"/>
    </location>
</feature>
<feature type="active site" description="Nucleophile" evidence="1">
    <location>
        <position position="83"/>
    </location>
</feature>
<feature type="active site" description="Nucleophile" evidence="1">
    <location>
        <position position="90"/>
    </location>
</feature>
<feature type="disulfide bond" description="Redox-active; alternate" evidence="1">
    <location>
        <begin position="11"/>
        <end position="83"/>
    </location>
</feature>
<feature type="disulfide bond" description="Redox-active; alternate" evidence="1">
    <location>
        <begin position="83"/>
        <end position="90"/>
    </location>
</feature>
<comment type="function">
    <text evidence="1">Catalyzes the reduction of arsenate [As(V)] to arsenite [As(III)].</text>
</comment>
<comment type="catalytic activity">
    <reaction evidence="1">
        <text>arsenate + [thioredoxin]-dithiol + H(+) = arsenite + [thioredoxin]-disulfide + H2O</text>
        <dbReference type="Rhea" id="RHEA:43848"/>
        <dbReference type="Rhea" id="RHEA-COMP:10698"/>
        <dbReference type="Rhea" id="RHEA-COMP:10700"/>
        <dbReference type="ChEBI" id="CHEBI:15377"/>
        <dbReference type="ChEBI" id="CHEBI:15378"/>
        <dbReference type="ChEBI" id="CHEBI:29242"/>
        <dbReference type="ChEBI" id="CHEBI:29950"/>
        <dbReference type="ChEBI" id="CHEBI:48597"/>
        <dbReference type="ChEBI" id="CHEBI:50058"/>
        <dbReference type="EC" id="1.20.4.4"/>
    </reaction>
</comment>
<comment type="subcellular location">
    <subcellularLocation>
        <location evidence="1">Cytoplasm</location>
    </subcellularLocation>
</comment>
<comment type="similarity">
    <text evidence="1">Belongs to the low molecular weight phosphotyrosine protein phosphatase family. Thioredoxin-coupled ArsC subfamily.</text>
</comment>
<evidence type="ECO:0000255" key="1">
    <source>
        <dbReference type="HAMAP-Rule" id="MF_01624"/>
    </source>
</evidence>
<name>ARSC1_BACC1</name>
<sequence length="134" mass="15006">MENKKTIYFLCTGNSCRSQMAEAWGKKYLGDKWNVLSAGIEAHGVNPNAIKAMKEVDIDITDQTSDIIDRDILDKADLVVTLCGHANDVCPTTPPHVKRVHWGFDDPAGQEWSVFQRVRDEIGARIKKYAETGE</sequence>
<proteinExistence type="inferred from homology"/>
<accession>Q74NT6</accession>
<keyword id="KW-0059">Arsenical resistance</keyword>
<keyword id="KW-0963">Cytoplasm</keyword>
<keyword id="KW-1015">Disulfide bond</keyword>
<keyword id="KW-0560">Oxidoreductase</keyword>
<keyword id="KW-0614">Plasmid</keyword>
<keyword id="KW-0676">Redox-active center</keyword>
<gene>
    <name evidence="1" type="primary">arsC1</name>
    <name type="ordered locus">BCE_A0158</name>
</gene>